<accession>Q2SS24</accession>
<feature type="chain" id="PRO_0000230920" description="Glucose-6-phosphate isomerase">
    <location>
        <begin position="1"/>
        <end position="427"/>
    </location>
</feature>
<feature type="active site" description="Proton donor" evidence="1">
    <location>
        <position position="277"/>
    </location>
</feature>
<feature type="active site" evidence="1">
    <location>
        <position position="298"/>
    </location>
</feature>
<feature type="active site" evidence="1">
    <location>
        <position position="414"/>
    </location>
</feature>
<keyword id="KW-0963">Cytoplasm</keyword>
<keyword id="KW-0312">Gluconeogenesis</keyword>
<keyword id="KW-0324">Glycolysis</keyword>
<keyword id="KW-0413">Isomerase</keyword>
<sequence>MIKVNLDHTDININKVADLNKIKEIHQMIFNKTGKGNDFLGWLNWPVNFNKTEYEQMKLVANDLKNQIEVLVVIGIGGSYLGCRAADEMIRGLYHQNKVELIYTGNTMSSTYIYQVVEYLKNKNFGICVISKSGTTTEPGISFRVFEKLLVDKVGLEKAKSLIVAITDKNKGALKQLAEKKGYQTFVIPNDIGGRFSVLTPVGIFPLLVSGINTDKIFQGALKAKNDLINDDLSNQAYKYAVVRNYLYNQGYKTEALISYELQLQMLTEWWKQLFGESEGKENKGLLPSSMIFSTDLHSLGQWVQEGPRNVMFETIIKIEKPNHDLNVPIDEDNYDGLNYLTKKSFHQINQTALKGVIQAHSVTGKMPNIVLEFEKMDDEQFGYLVYFFELALAMSAYLLDVNPFNQPGVEVYKYNMFKLLNKPGIK</sequence>
<organism>
    <name type="scientific">Mycoplasma capricolum subsp. capricolum (strain California kid / ATCC 27343 / NCTC 10154)</name>
    <dbReference type="NCBI Taxonomy" id="340047"/>
    <lineage>
        <taxon>Bacteria</taxon>
        <taxon>Bacillati</taxon>
        <taxon>Mycoplasmatota</taxon>
        <taxon>Mollicutes</taxon>
        <taxon>Mycoplasmataceae</taxon>
        <taxon>Mycoplasma</taxon>
    </lineage>
</organism>
<dbReference type="EC" id="5.3.1.9" evidence="1"/>
<dbReference type="EMBL" id="CP000123">
    <property type="protein sequence ID" value="ABC01694.1"/>
    <property type="molecule type" value="Genomic_DNA"/>
</dbReference>
<dbReference type="RefSeq" id="WP_011387338.1">
    <property type="nucleotide sequence ID" value="NC_007633.1"/>
</dbReference>
<dbReference type="SMR" id="Q2SS24"/>
<dbReference type="GeneID" id="23778579"/>
<dbReference type="KEGG" id="mcp:MCAP_0465"/>
<dbReference type="HOGENOM" id="CLU_037303_0_1_14"/>
<dbReference type="PhylomeDB" id="Q2SS24"/>
<dbReference type="UniPathway" id="UPA00109">
    <property type="reaction ID" value="UER00181"/>
</dbReference>
<dbReference type="UniPathway" id="UPA00138"/>
<dbReference type="Proteomes" id="UP000001928">
    <property type="component" value="Chromosome"/>
</dbReference>
<dbReference type="GO" id="GO:0005829">
    <property type="term" value="C:cytosol"/>
    <property type="evidence" value="ECO:0007669"/>
    <property type="project" value="TreeGrafter"/>
</dbReference>
<dbReference type="GO" id="GO:0097367">
    <property type="term" value="F:carbohydrate derivative binding"/>
    <property type="evidence" value="ECO:0007669"/>
    <property type="project" value="InterPro"/>
</dbReference>
<dbReference type="GO" id="GO:0004347">
    <property type="term" value="F:glucose-6-phosphate isomerase activity"/>
    <property type="evidence" value="ECO:0007669"/>
    <property type="project" value="UniProtKB-UniRule"/>
</dbReference>
<dbReference type="GO" id="GO:0048029">
    <property type="term" value="F:monosaccharide binding"/>
    <property type="evidence" value="ECO:0007669"/>
    <property type="project" value="TreeGrafter"/>
</dbReference>
<dbReference type="GO" id="GO:0006094">
    <property type="term" value="P:gluconeogenesis"/>
    <property type="evidence" value="ECO:0007669"/>
    <property type="project" value="UniProtKB-UniRule"/>
</dbReference>
<dbReference type="GO" id="GO:0051156">
    <property type="term" value="P:glucose 6-phosphate metabolic process"/>
    <property type="evidence" value="ECO:0007669"/>
    <property type="project" value="TreeGrafter"/>
</dbReference>
<dbReference type="GO" id="GO:0006096">
    <property type="term" value="P:glycolytic process"/>
    <property type="evidence" value="ECO:0007669"/>
    <property type="project" value="UniProtKB-UniRule"/>
</dbReference>
<dbReference type="CDD" id="cd05015">
    <property type="entry name" value="SIS_PGI_1"/>
    <property type="match status" value="1"/>
</dbReference>
<dbReference type="CDD" id="cd05016">
    <property type="entry name" value="SIS_PGI_2"/>
    <property type="match status" value="1"/>
</dbReference>
<dbReference type="FunFam" id="3.40.50.10490:FF:000016">
    <property type="entry name" value="Glucose-6-phosphate isomerase"/>
    <property type="match status" value="1"/>
</dbReference>
<dbReference type="Gene3D" id="3.40.50.10490">
    <property type="entry name" value="Glucose-6-phosphate isomerase like protein, domain 1"/>
    <property type="match status" value="2"/>
</dbReference>
<dbReference type="HAMAP" id="MF_00473">
    <property type="entry name" value="G6P_isomerase"/>
    <property type="match status" value="1"/>
</dbReference>
<dbReference type="InterPro" id="IPR001672">
    <property type="entry name" value="G6P_Isomerase"/>
</dbReference>
<dbReference type="InterPro" id="IPR018189">
    <property type="entry name" value="Phosphoglucose_isomerase_CS"/>
</dbReference>
<dbReference type="InterPro" id="IPR046348">
    <property type="entry name" value="SIS_dom_sf"/>
</dbReference>
<dbReference type="InterPro" id="IPR035476">
    <property type="entry name" value="SIS_PGI_1"/>
</dbReference>
<dbReference type="InterPro" id="IPR035482">
    <property type="entry name" value="SIS_PGI_2"/>
</dbReference>
<dbReference type="NCBIfam" id="NF010697">
    <property type="entry name" value="PRK14097.1"/>
    <property type="match status" value="1"/>
</dbReference>
<dbReference type="PANTHER" id="PTHR11469">
    <property type="entry name" value="GLUCOSE-6-PHOSPHATE ISOMERASE"/>
    <property type="match status" value="1"/>
</dbReference>
<dbReference type="PANTHER" id="PTHR11469:SF1">
    <property type="entry name" value="GLUCOSE-6-PHOSPHATE ISOMERASE"/>
    <property type="match status" value="1"/>
</dbReference>
<dbReference type="Pfam" id="PF00342">
    <property type="entry name" value="PGI"/>
    <property type="match status" value="1"/>
</dbReference>
<dbReference type="PRINTS" id="PR00662">
    <property type="entry name" value="G6PISOMERASE"/>
</dbReference>
<dbReference type="SUPFAM" id="SSF53697">
    <property type="entry name" value="SIS domain"/>
    <property type="match status" value="1"/>
</dbReference>
<dbReference type="PROSITE" id="PS00765">
    <property type="entry name" value="P_GLUCOSE_ISOMERASE_1"/>
    <property type="match status" value="1"/>
</dbReference>
<dbReference type="PROSITE" id="PS00174">
    <property type="entry name" value="P_GLUCOSE_ISOMERASE_2"/>
    <property type="match status" value="1"/>
</dbReference>
<dbReference type="PROSITE" id="PS51463">
    <property type="entry name" value="P_GLUCOSE_ISOMERASE_3"/>
    <property type="match status" value="1"/>
</dbReference>
<evidence type="ECO:0000255" key="1">
    <source>
        <dbReference type="HAMAP-Rule" id="MF_00473"/>
    </source>
</evidence>
<proteinExistence type="inferred from homology"/>
<protein>
    <recommendedName>
        <fullName evidence="1">Glucose-6-phosphate isomerase</fullName>
        <shortName evidence="1">GPI</shortName>
        <ecNumber evidence="1">5.3.1.9</ecNumber>
    </recommendedName>
    <alternativeName>
        <fullName evidence="1">Phosphoglucose isomerase</fullName>
        <shortName evidence="1">PGI</shortName>
    </alternativeName>
    <alternativeName>
        <fullName evidence="1">Phosphohexose isomerase</fullName>
        <shortName evidence="1">PHI</shortName>
    </alternativeName>
</protein>
<gene>
    <name evidence="1" type="primary">pgi</name>
    <name type="ordered locus">MCAP_0465</name>
</gene>
<name>G6PI_MYCCT</name>
<comment type="function">
    <text evidence="1">Catalyzes the reversible isomerization of glucose-6-phosphate to fructose-6-phosphate.</text>
</comment>
<comment type="catalytic activity">
    <reaction evidence="1">
        <text>alpha-D-glucose 6-phosphate = beta-D-fructose 6-phosphate</text>
        <dbReference type="Rhea" id="RHEA:11816"/>
        <dbReference type="ChEBI" id="CHEBI:57634"/>
        <dbReference type="ChEBI" id="CHEBI:58225"/>
        <dbReference type="EC" id="5.3.1.9"/>
    </reaction>
</comment>
<comment type="pathway">
    <text evidence="1">Carbohydrate biosynthesis; gluconeogenesis.</text>
</comment>
<comment type="pathway">
    <text evidence="1">Carbohydrate degradation; glycolysis; D-glyceraldehyde 3-phosphate and glycerone phosphate from D-glucose: step 2/4.</text>
</comment>
<comment type="subcellular location">
    <subcellularLocation>
        <location evidence="1">Cytoplasm</location>
    </subcellularLocation>
</comment>
<comment type="similarity">
    <text evidence="1">Belongs to the GPI family.</text>
</comment>
<reference key="1">
    <citation type="submission" date="2005-09" db="EMBL/GenBank/DDBJ databases">
        <authorList>
            <person name="Glass J.I."/>
            <person name="Lartigue C."/>
            <person name="Pfannkoch C."/>
            <person name="Baden-Tillson H."/>
            <person name="Smith H.O."/>
            <person name="Venter J.C."/>
            <person name="Roske K."/>
            <person name="Wise K.S."/>
            <person name="Calcutt M.J."/>
            <person name="Nelson W.C."/>
            <person name="Nierman W.C."/>
        </authorList>
    </citation>
    <scope>NUCLEOTIDE SEQUENCE [LARGE SCALE GENOMIC DNA]</scope>
    <source>
        <strain>California kid / ATCC 27343 / NCTC 10154</strain>
    </source>
</reference>